<reference key="1">
    <citation type="journal article" date="2015" name="Genome Biol. Evol.">
        <title>Molecular diversity and gene evolution of the venom arsenal of Terebridae predatory marine snails.</title>
        <authorList>
            <person name="Gorson J."/>
            <person name="Ramrattan G."/>
            <person name="Verdes A."/>
            <person name="Wright E.M."/>
            <person name="Kantor Y."/>
            <person name="Rajaram Srinivasan R."/>
            <person name="Musunuri R."/>
            <person name="Packer D."/>
            <person name="Albano G."/>
            <person name="Qiu W.G."/>
            <person name="Holford M."/>
        </authorList>
    </citation>
    <scope>NUCLEOTIDE SEQUENCE [MRNA]</scope>
    <source>
        <tissue>Venom duct</tissue>
    </source>
</reference>
<feature type="signal peptide" evidence="1">
    <location>
        <begin position="1"/>
        <end position="21"/>
    </location>
</feature>
<feature type="propeptide" id="PRO_0000435060" evidence="3">
    <location>
        <begin position="22"/>
        <end position="40"/>
    </location>
</feature>
<feature type="peptide" id="PRO_0000435061" description="Teretoxin Tsu1.1">
    <location>
        <begin position="41"/>
        <end position="62"/>
    </location>
</feature>
<name>T11_TERSU</name>
<keyword id="KW-1015">Disulfide bond</keyword>
<keyword id="KW-0964">Secreted</keyword>
<keyword id="KW-0732">Signal</keyword>
<keyword id="KW-0800">Toxin</keyword>
<proteinExistence type="inferred from homology"/>
<evidence type="ECO:0000255" key="1"/>
<evidence type="ECO:0000303" key="2">
    <source>
    </source>
</evidence>
<evidence type="ECO:0000305" key="3"/>
<evidence type="ECO:0000305" key="4">
    <source>
    </source>
</evidence>
<organism>
    <name type="scientific">Terebra subulata</name>
    <name type="common">Chocolate spotted auger</name>
    <name type="synonym">Buccinum subulatum</name>
    <dbReference type="NCBI Taxonomy" id="89435"/>
    <lineage>
        <taxon>Eukaryota</taxon>
        <taxon>Metazoa</taxon>
        <taxon>Spiralia</taxon>
        <taxon>Lophotrochozoa</taxon>
        <taxon>Mollusca</taxon>
        <taxon>Gastropoda</taxon>
        <taxon>Caenogastropoda</taxon>
        <taxon>Neogastropoda</taxon>
        <taxon>Conoidea</taxon>
        <taxon>Terebridae</taxon>
        <taxon>Terebra</taxon>
    </lineage>
</organism>
<protein>
    <recommendedName>
        <fullName evidence="2">Teretoxin Tsu1.1</fullName>
    </recommendedName>
</protein>
<comment type="subcellular location">
    <subcellularLocation>
        <location evidence="4">Secreted</location>
    </subcellularLocation>
</comment>
<comment type="tissue specificity">
    <text evidence="4">Expressed by the venom duct.</text>
</comment>
<comment type="domain">
    <text>The cysteine framework is I (CC-C-C). Alpha4/4 pattern.</text>
</comment>
<comment type="PTM">
    <text evidence="3">Contains 2 disulfide bonds.</text>
</comment>
<comment type="similarity">
    <text>Belongs to the teretoxin A (TA) superfamily.</text>
</comment>
<dbReference type="GO" id="GO:0005576">
    <property type="term" value="C:extracellular region"/>
    <property type="evidence" value="ECO:0007669"/>
    <property type="project" value="UniProtKB-SubCell"/>
</dbReference>
<dbReference type="GO" id="GO:0090729">
    <property type="term" value="F:toxin activity"/>
    <property type="evidence" value="ECO:0007669"/>
    <property type="project" value="UniProtKB-KW"/>
</dbReference>
<accession>P0DN47</accession>
<sequence>MSCFPVLFVMMLLASQSVWAFPEPETRIGTARDAESMGVRSAVEECCENPVCKHTSGCPTTG</sequence>